<keyword id="KW-0269">Exonuclease</keyword>
<keyword id="KW-0378">Hydrolase</keyword>
<keyword id="KW-0460">Magnesium</keyword>
<keyword id="KW-0479">Metal-binding</keyword>
<keyword id="KW-0540">Nuclease</keyword>
<keyword id="KW-0819">tRNA processing</keyword>
<evidence type="ECO:0000255" key="1">
    <source>
        <dbReference type="HAMAP-Rule" id="MF_00157"/>
    </source>
</evidence>
<feature type="chain" id="PRO_1000011420" description="Ribonuclease T">
    <location>
        <begin position="1"/>
        <end position="223"/>
    </location>
</feature>
<feature type="domain" description="Exonuclease" evidence="1">
    <location>
        <begin position="20"/>
        <end position="194"/>
    </location>
</feature>
<feature type="active site" description="Proton donor/acceptor" evidence="1">
    <location>
        <position position="181"/>
    </location>
</feature>
<feature type="binding site" evidence="1">
    <location>
        <position position="23"/>
    </location>
    <ligand>
        <name>Mg(2+)</name>
        <dbReference type="ChEBI" id="CHEBI:18420"/>
        <label>1</label>
        <note>catalytic</note>
    </ligand>
</feature>
<feature type="binding site" evidence="1">
    <location>
        <position position="23"/>
    </location>
    <ligand>
        <name>Mg(2+)</name>
        <dbReference type="ChEBI" id="CHEBI:18420"/>
        <label>2</label>
        <note>catalytic</note>
    </ligand>
</feature>
<feature type="binding site" evidence="1">
    <location>
        <position position="25"/>
    </location>
    <ligand>
        <name>Mg(2+)</name>
        <dbReference type="ChEBI" id="CHEBI:18420"/>
        <label>2</label>
        <note>catalytic</note>
    </ligand>
</feature>
<feature type="binding site" evidence="1">
    <location>
        <position position="181"/>
    </location>
    <ligand>
        <name>Mg(2+)</name>
        <dbReference type="ChEBI" id="CHEBI:18420"/>
        <label>2</label>
        <note>catalytic</note>
    </ligand>
</feature>
<feature type="binding site" evidence="1">
    <location>
        <position position="186"/>
    </location>
    <ligand>
        <name>Mg(2+)</name>
        <dbReference type="ChEBI" id="CHEBI:18420"/>
        <label>2</label>
        <note>catalytic</note>
    </ligand>
</feature>
<feature type="site" description="Important for substrate binding and specificity" evidence="1">
    <location>
        <position position="29"/>
    </location>
</feature>
<feature type="site" description="Important for substrate binding and specificity" evidence="1">
    <location>
        <position position="77"/>
    </location>
</feature>
<feature type="site" description="Important for substrate binding and specificity" evidence="1">
    <location>
        <position position="124"/>
    </location>
</feature>
<feature type="site" description="Important for substrate binding and specificity" evidence="1">
    <location>
        <position position="146"/>
    </location>
</feature>
<proteinExistence type="inferred from homology"/>
<gene>
    <name evidence="1" type="primary">rnt</name>
    <name type="ordered locus">Sputw3181_2422</name>
</gene>
<organism>
    <name type="scientific">Shewanella sp. (strain W3-18-1)</name>
    <dbReference type="NCBI Taxonomy" id="351745"/>
    <lineage>
        <taxon>Bacteria</taxon>
        <taxon>Pseudomonadati</taxon>
        <taxon>Pseudomonadota</taxon>
        <taxon>Gammaproteobacteria</taxon>
        <taxon>Alteromonadales</taxon>
        <taxon>Shewanellaceae</taxon>
        <taxon>Shewanella</taxon>
    </lineage>
</organism>
<name>RNT_SHESW</name>
<accession>A1RKQ1</accession>
<protein>
    <recommendedName>
        <fullName evidence="1">Ribonuclease T</fullName>
        <ecNumber evidence="1">3.1.13.-</ecNumber>
    </recommendedName>
    <alternativeName>
        <fullName evidence="1">Exoribonuclease T</fullName>
        <shortName evidence="1">RNase T</shortName>
    </alternativeName>
</protein>
<dbReference type="EC" id="3.1.13.-" evidence="1"/>
<dbReference type="EMBL" id="CP000503">
    <property type="protein sequence ID" value="ABM25246.1"/>
    <property type="molecule type" value="Genomic_DNA"/>
</dbReference>
<dbReference type="RefSeq" id="WP_011789708.1">
    <property type="nucleotide sequence ID" value="NC_008750.1"/>
</dbReference>
<dbReference type="SMR" id="A1RKQ1"/>
<dbReference type="KEGG" id="shw:Sputw3181_2422"/>
<dbReference type="HOGENOM" id="CLU_082724_0_0_6"/>
<dbReference type="Proteomes" id="UP000002597">
    <property type="component" value="Chromosome"/>
</dbReference>
<dbReference type="GO" id="GO:0005829">
    <property type="term" value="C:cytosol"/>
    <property type="evidence" value="ECO:0007669"/>
    <property type="project" value="TreeGrafter"/>
</dbReference>
<dbReference type="GO" id="GO:0008408">
    <property type="term" value="F:3'-5' exonuclease activity"/>
    <property type="evidence" value="ECO:0007669"/>
    <property type="project" value="TreeGrafter"/>
</dbReference>
<dbReference type="GO" id="GO:0000287">
    <property type="term" value="F:magnesium ion binding"/>
    <property type="evidence" value="ECO:0007669"/>
    <property type="project" value="UniProtKB-UniRule"/>
</dbReference>
<dbReference type="GO" id="GO:0003676">
    <property type="term" value="F:nucleic acid binding"/>
    <property type="evidence" value="ECO:0007669"/>
    <property type="project" value="InterPro"/>
</dbReference>
<dbReference type="GO" id="GO:0016896">
    <property type="term" value="F:RNA exonuclease activity, producing 5'-phosphomonoesters"/>
    <property type="evidence" value="ECO:0007669"/>
    <property type="project" value="UniProtKB-UniRule"/>
</dbReference>
<dbReference type="GO" id="GO:0045004">
    <property type="term" value="P:DNA replication proofreading"/>
    <property type="evidence" value="ECO:0007669"/>
    <property type="project" value="TreeGrafter"/>
</dbReference>
<dbReference type="GO" id="GO:0008033">
    <property type="term" value="P:tRNA processing"/>
    <property type="evidence" value="ECO:0007669"/>
    <property type="project" value="UniProtKB-KW"/>
</dbReference>
<dbReference type="FunFam" id="3.30.420.10:FF:000009">
    <property type="entry name" value="Ribonuclease T"/>
    <property type="match status" value="1"/>
</dbReference>
<dbReference type="Gene3D" id="3.30.420.10">
    <property type="entry name" value="Ribonuclease H-like superfamily/Ribonuclease H"/>
    <property type="match status" value="1"/>
</dbReference>
<dbReference type="HAMAP" id="MF_00157">
    <property type="entry name" value="RNase_T"/>
    <property type="match status" value="1"/>
</dbReference>
<dbReference type="InterPro" id="IPR013520">
    <property type="entry name" value="Exonuclease_RNaseT/DNA_pol3"/>
</dbReference>
<dbReference type="InterPro" id="IPR005987">
    <property type="entry name" value="RNase_T"/>
</dbReference>
<dbReference type="InterPro" id="IPR012337">
    <property type="entry name" value="RNaseH-like_sf"/>
</dbReference>
<dbReference type="InterPro" id="IPR036397">
    <property type="entry name" value="RNaseH_sf"/>
</dbReference>
<dbReference type="NCBIfam" id="TIGR01298">
    <property type="entry name" value="RNaseT"/>
    <property type="match status" value="1"/>
</dbReference>
<dbReference type="PANTHER" id="PTHR30231">
    <property type="entry name" value="DNA POLYMERASE III SUBUNIT EPSILON"/>
    <property type="match status" value="1"/>
</dbReference>
<dbReference type="PANTHER" id="PTHR30231:SF2">
    <property type="entry name" value="RIBONUCLEASE T"/>
    <property type="match status" value="1"/>
</dbReference>
<dbReference type="Pfam" id="PF00929">
    <property type="entry name" value="RNase_T"/>
    <property type="match status" value="1"/>
</dbReference>
<dbReference type="SMART" id="SM00479">
    <property type="entry name" value="EXOIII"/>
    <property type="match status" value="1"/>
</dbReference>
<dbReference type="SUPFAM" id="SSF53098">
    <property type="entry name" value="Ribonuclease H-like"/>
    <property type="match status" value="1"/>
</dbReference>
<comment type="function">
    <text evidence="1">Trims short 3' overhangs of a variety of RNA species, leaving a one or two nucleotide 3' overhang. Responsible for the end-turnover of tRNA: specifically removes the terminal AMP residue from uncharged tRNA (tRNA-C-C-A). Also appears to be involved in tRNA biosynthesis.</text>
</comment>
<comment type="cofactor">
    <cofactor evidence="1">
        <name>Mg(2+)</name>
        <dbReference type="ChEBI" id="CHEBI:18420"/>
    </cofactor>
    <text evidence="1">Binds two Mg(2+) per subunit. The active form of the enzyme binds two Mg(2+) ions in its active site. The first Mg(2+) forms only one salt bridge with the protein.</text>
</comment>
<comment type="subunit">
    <text evidence="1">Homodimer.</text>
</comment>
<comment type="similarity">
    <text evidence="1">Belongs to the RNase T family.</text>
</comment>
<sequence length="223" mass="24468">MSDICDANKLKHRFRGYFPVVIDVETAGFNSQTDALLEIAVTLLKMDDEGMLGIDKTLHFHIEPFEGANLEPAALAFNGIDPNNPLRGAVSEKEAFLDIFKAVKKAQKAADCHRCIIVAHNAAFDHGFVSKAIERCDLKRSPFHPFATFDTATLAGLAIGHTVLAKACMMAGIPFDNKEAHSALYDTERTAELFCYIVNRWKQLGGWPLLAAGAQDAESDTEE</sequence>
<reference key="1">
    <citation type="submission" date="2006-12" db="EMBL/GenBank/DDBJ databases">
        <title>Complete sequence of Shewanella sp. W3-18-1.</title>
        <authorList>
            <consortium name="US DOE Joint Genome Institute"/>
            <person name="Copeland A."/>
            <person name="Lucas S."/>
            <person name="Lapidus A."/>
            <person name="Barry K."/>
            <person name="Detter J.C."/>
            <person name="Glavina del Rio T."/>
            <person name="Hammon N."/>
            <person name="Israni S."/>
            <person name="Dalin E."/>
            <person name="Tice H."/>
            <person name="Pitluck S."/>
            <person name="Chain P."/>
            <person name="Malfatti S."/>
            <person name="Shin M."/>
            <person name="Vergez L."/>
            <person name="Schmutz J."/>
            <person name="Larimer F."/>
            <person name="Land M."/>
            <person name="Hauser L."/>
            <person name="Kyrpides N."/>
            <person name="Lykidis A."/>
            <person name="Tiedje J."/>
            <person name="Richardson P."/>
        </authorList>
    </citation>
    <scope>NUCLEOTIDE SEQUENCE [LARGE SCALE GENOMIC DNA]</scope>
    <source>
        <strain>W3-18-1</strain>
    </source>
</reference>